<reference key="1">
    <citation type="submission" date="2007-11" db="EMBL/GenBank/DDBJ databases">
        <title>Genome sequencing of phylogenetically and phenotypically diverse Coxiella burnetii isolates.</title>
        <authorList>
            <person name="Seshadri R."/>
            <person name="Samuel J.E."/>
        </authorList>
    </citation>
    <scope>NUCLEOTIDE SEQUENCE [LARGE SCALE GENOMIC DNA]</scope>
    <source>
        <strain>RSA 331 / Henzerling II</strain>
    </source>
</reference>
<gene>
    <name type="ordered locus">COXBURSA331_A0203</name>
</gene>
<protein>
    <recommendedName>
        <fullName evidence="1">Nucleotide-binding protein COXBURSA331_A0203</fullName>
    </recommendedName>
</protein>
<accession>A9NA23</accession>
<proteinExistence type="inferred from homology"/>
<comment type="function">
    <text evidence="1">Nucleotide-binding protein.</text>
</comment>
<comment type="similarity">
    <text evidence="1">Belongs to the YajQ family.</text>
</comment>
<name>Y203_COXBR</name>
<organism>
    <name type="scientific">Coxiella burnetii (strain RSA 331 / Henzerling II)</name>
    <dbReference type="NCBI Taxonomy" id="360115"/>
    <lineage>
        <taxon>Bacteria</taxon>
        <taxon>Pseudomonadati</taxon>
        <taxon>Pseudomonadota</taxon>
        <taxon>Gammaproteobacteria</taxon>
        <taxon>Legionellales</taxon>
        <taxon>Coxiellaceae</taxon>
        <taxon>Coxiella</taxon>
    </lineage>
</organism>
<sequence length="160" mass="18184">MPSFDIQSELNKHEVSNAVDQANREVATRFDFKGSGATYKYEGNSITLQAETDFQLKQMIDILQNKFAKRQIDVAHMKLEDPIIQHKSAQQTVMLLEGIDQTAAKKIIKLIKDQKLKVQAAIQGEKVRVTGKKRDDLQSVIGLLKEQEIGLPLQFDNFRD</sequence>
<keyword id="KW-0547">Nucleotide-binding</keyword>
<feature type="chain" id="PRO_1000082624" description="Nucleotide-binding protein COXBURSA331_A0203">
    <location>
        <begin position="1"/>
        <end position="160"/>
    </location>
</feature>
<evidence type="ECO:0000255" key="1">
    <source>
        <dbReference type="HAMAP-Rule" id="MF_00632"/>
    </source>
</evidence>
<dbReference type="EMBL" id="CP000890">
    <property type="protein sequence ID" value="ABX79029.1"/>
    <property type="molecule type" value="Genomic_DNA"/>
</dbReference>
<dbReference type="RefSeq" id="WP_005772268.1">
    <property type="nucleotide sequence ID" value="NC_010117.1"/>
</dbReference>
<dbReference type="SMR" id="A9NA23"/>
<dbReference type="KEGG" id="cbs:COXBURSA331_A0203"/>
<dbReference type="HOGENOM" id="CLU_099839_1_0_6"/>
<dbReference type="GO" id="GO:0005829">
    <property type="term" value="C:cytosol"/>
    <property type="evidence" value="ECO:0007669"/>
    <property type="project" value="TreeGrafter"/>
</dbReference>
<dbReference type="GO" id="GO:0000166">
    <property type="term" value="F:nucleotide binding"/>
    <property type="evidence" value="ECO:0007669"/>
    <property type="project" value="TreeGrafter"/>
</dbReference>
<dbReference type="CDD" id="cd11740">
    <property type="entry name" value="YajQ_like"/>
    <property type="match status" value="1"/>
</dbReference>
<dbReference type="FunFam" id="3.30.70.860:FF:000001">
    <property type="entry name" value="UPF0234 protein YajQ"/>
    <property type="match status" value="1"/>
</dbReference>
<dbReference type="Gene3D" id="3.30.70.860">
    <property type="match status" value="1"/>
</dbReference>
<dbReference type="Gene3D" id="3.30.70.990">
    <property type="entry name" value="YajQ-like, domain 2"/>
    <property type="match status" value="1"/>
</dbReference>
<dbReference type="HAMAP" id="MF_00632">
    <property type="entry name" value="YajQ"/>
    <property type="match status" value="1"/>
</dbReference>
<dbReference type="InterPro" id="IPR007551">
    <property type="entry name" value="DUF520"/>
</dbReference>
<dbReference type="InterPro" id="IPR035571">
    <property type="entry name" value="UPF0234-like_C"/>
</dbReference>
<dbReference type="InterPro" id="IPR035570">
    <property type="entry name" value="UPF0234_N"/>
</dbReference>
<dbReference type="InterPro" id="IPR036183">
    <property type="entry name" value="YajQ-like_sf"/>
</dbReference>
<dbReference type="NCBIfam" id="NF003819">
    <property type="entry name" value="PRK05412.1"/>
    <property type="match status" value="1"/>
</dbReference>
<dbReference type="PANTHER" id="PTHR30476">
    <property type="entry name" value="UPF0234 PROTEIN YAJQ"/>
    <property type="match status" value="1"/>
</dbReference>
<dbReference type="PANTHER" id="PTHR30476:SF0">
    <property type="entry name" value="UPF0234 PROTEIN YAJQ"/>
    <property type="match status" value="1"/>
</dbReference>
<dbReference type="Pfam" id="PF04461">
    <property type="entry name" value="DUF520"/>
    <property type="match status" value="1"/>
</dbReference>
<dbReference type="SUPFAM" id="SSF89963">
    <property type="entry name" value="YajQ-like"/>
    <property type="match status" value="2"/>
</dbReference>